<proteinExistence type="inferred from homology"/>
<feature type="chain" id="PRO_0000313211" description="DNA ligase">
    <location>
        <begin position="1"/>
        <end position="683"/>
    </location>
</feature>
<feature type="domain" description="BRCT" evidence="1">
    <location>
        <begin position="602"/>
        <end position="683"/>
    </location>
</feature>
<feature type="active site" description="N6-AMP-lysine intermediate" evidence="1">
    <location>
        <position position="118"/>
    </location>
</feature>
<feature type="binding site" evidence="1">
    <location>
        <begin position="35"/>
        <end position="39"/>
    </location>
    <ligand>
        <name>NAD(+)</name>
        <dbReference type="ChEBI" id="CHEBI:57540"/>
    </ligand>
</feature>
<feature type="binding site" evidence="1">
    <location>
        <begin position="84"/>
        <end position="85"/>
    </location>
    <ligand>
        <name>NAD(+)</name>
        <dbReference type="ChEBI" id="CHEBI:57540"/>
    </ligand>
</feature>
<feature type="binding site" evidence="1">
    <location>
        <position position="116"/>
    </location>
    <ligand>
        <name>NAD(+)</name>
        <dbReference type="ChEBI" id="CHEBI:57540"/>
    </ligand>
</feature>
<feature type="binding site" evidence="1">
    <location>
        <position position="139"/>
    </location>
    <ligand>
        <name>NAD(+)</name>
        <dbReference type="ChEBI" id="CHEBI:57540"/>
    </ligand>
</feature>
<feature type="binding site" evidence="1">
    <location>
        <position position="176"/>
    </location>
    <ligand>
        <name>NAD(+)</name>
        <dbReference type="ChEBI" id="CHEBI:57540"/>
    </ligand>
</feature>
<feature type="binding site" evidence="1">
    <location>
        <position position="293"/>
    </location>
    <ligand>
        <name>NAD(+)</name>
        <dbReference type="ChEBI" id="CHEBI:57540"/>
    </ligand>
</feature>
<feature type="binding site" evidence="1">
    <location>
        <position position="317"/>
    </location>
    <ligand>
        <name>NAD(+)</name>
        <dbReference type="ChEBI" id="CHEBI:57540"/>
    </ligand>
</feature>
<feature type="binding site" evidence="1">
    <location>
        <position position="419"/>
    </location>
    <ligand>
        <name>Zn(2+)</name>
        <dbReference type="ChEBI" id="CHEBI:29105"/>
    </ligand>
</feature>
<feature type="binding site" evidence="1">
    <location>
        <position position="422"/>
    </location>
    <ligand>
        <name>Zn(2+)</name>
        <dbReference type="ChEBI" id="CHEBI:29105"/>
    </ligand>
</feature>
<feature type="binding site" evidence="1">
    <location>
        <position position="437"/>
    </location>
    <ligand>
        <name>Zn(2+)</name>
        <dbReference type="ChEBI" id="CHEBI:29105"/>
    </ligand>
</feature>
<feature type="binding site" evidence="1">
    <location>
        <position position="443"/>
    </location>
    <ligand>
        <name>Zn(2+)</name>
        <dbReference type="ChEBI" id="CHEBI:29105"/>
    </ligand>
</feature>
<accession>Q47FA0</accession>
<organism>
    <name type="scientific">Dechloromonas aromatica (strain RCB)</name>
    <dbReference type="NCBI Taxonomy" id="159087"/>
    <lineage>
        <taxon>Bacteria</taxon>
        <taxon>Pseudomonadati</taxon>
        <taxon>Pseudomonadota</taxon>
        <taxon>Betaproteobacteria</taxon>
        <taxon>Rhodocyclales</taxon>
        <taxon>Azonexaceae</taxon>
        <taxon>Dechloromonas</taxon>
    </lineage>
</organism>
<reference key="1">
    <citation type="journal article" date="2009" name="BMC Genomics">
        <title>Metabolic analysis of the soil microbe Dechloromonas aromatica str. RCB: indications of a surprisingly complex life-style and cryptic anaerobic pathways for aromatic degradation.</title>
        <authorList>
            <person name="Salinero K.K."/>
            <person name="Keller K."/>
            <person name="Feil W.S."/>
            <person name="Feil H."/>
            <person name="Trong S."/>
            <person name="Di Bartolo G."/>
            <person name="Lapidus A."/>
        </authorList>
    </citation>
    <scope>NUCLEOTIDE SEQUENCE [LARGE SCALE GENOMIC DNA]</scope>
    <source>
        <strain>RCB</strain>
    </source>
</reference>
<evidence type="ECO:0000255" key="1">
    <source>
        <dbReference type="HAMAP-Rule" id="MF_01588"/>
    </source>
</evidence>
<dbReference type="EC" id="6.5.1.2" evidence="1"/>
<dbReference type="EMBL" id="CP000089">
    <property type="protein sequence ID" value="AAZ46481.1"/>
    <property type="molecule type" value="Genomic_DNA"/>
</dbReference>
<dbReference type="SMR" id="Q47FA0"/>
<dbReference type="STRING" id="159087.Daro_1734"/>
<dbReference type="KEGG" id="dar:Daro_1734"/>
<dbReference type="eggNOG" id="COG0272">
    <property type="taxonomic scope" value="Bacteria"/>
</dbReference>
<dbReference type="HOGENOM" id="CLU_007764_2_1_4"/>
<dbReference type="OrthoDB" id="9759736at2"/>
<dbReference type="GO" id="GO:0003677">
    <property type="term" value="F:DNA binding"/>
    <property type="evidence" value="ECO:0007669"/>
    <property type="project" value="InterPro"/>
</dbReference>
<dbReference type="GO" id="GO:0003911">
    <property type="term" value="F:DNA ligase (NAD+) activity"/>
    <property type="evidence" value="ECO:0007669"/>
    <property type="project" value="UniProtKB-UniRule"/>
</dbReference>
<dbReference type="GO" id="GO:0046872">
    <property type="term" value="F:metal ion binding"/>
    <property type="evidence" value="ECO:0007669"/>
    <property type="project" value="UniProtKB-KW"/>
</dbReference>
<dbReference type="GO" id="GO:0006281">
    <property type="term" value="P:DNA repair"/>
    <property type="evidence" value="ECO:0007669"/>
    <property type="project" value="UniProtKB-KW"/>
</dbReference>
<dbReference type="GO" id="GO:0006260">
    <property type="term" value="P:DNA replication"/>
    <property type="evidence" value="ECO:0007669"/>
    <property type="project" value="UniProtKB-KW"/>
</dbReference>
<dbReference type="CDD" id="cd17748">
    <property type="entry name" value="BRCT_DNA_ligase_like"/>
    <property type="match status" value="1"/>
</dbReference>
<dbReference type="CDD" id="cd00114">
    <property type="entry name" value="LIGANc"/>
    <property type="match status" value="1"/>
</dbReference>
<dbReference type="FunFam" id="1.10.150.20:FF:000006">
    <property type="entry name" value="DNA ligase"/>
    <property type="match status" value="1"/>
</dbReference>
<dbReference type="FunFam" id="1.10.150.20:FF:000007">
    <property type="entry name" value="DNA ligase"/>
    <property type="match status" value="1"/>
</dbReference>
<dbReference type="FunFam" id="1.10.287.610:FF:000002">
    <property type="entry name" value="DNA ligase"/>
    <property type="match status" value="1"/>
</dbReference>
<dbReference type="FunFam" id="2.40.50.140:FF:000012">
    <property type="entry name" value="DNA ligase"/>
    <property type="match status" value="1"/>
</dbReference>
<dbReference type="FunFam" id="3.30.470.30:FF:000001">
    <property type="entry name" value="DNA ligase"/>
    <property type="match status" value="1"/>
</dbReference>
<dbReference type="FunFam" id="3.40.50.10190:FF:000045">
    <property type="entry name" value="DNA ligase"/>
    <property type="match status" value="1"/>
</dbReference>
<dbReference type="Gene3D" id="6.20.10.30">
    <property type="match status" value="1"/>
</dbReference>
<dbReference type="Gene3D" id="1.10.150.20">
    <property type="entry name" value="5' to 3' exonuclease, C-terminal subdomain"/>
    <property type="match status" value="2"/>
</dbReference>
<dbReference type="Gene3D" id="3.40.50.10190">
    <property type="entry name" value="BRCT domain"/>
    <property type="match status" value="1"/>
</dbReference>
<dbReference type="Gene3D" id="3.30.470.30">
    <property type="entry name" value="DNA ligase/mRNA capping enzyme"/>
    <property type="match status" value="1"/>
</dbReference>
<dbReference type="Gene3D" id="1.10.287.610">
    <property type="entry name" value="Helix hairpin bin"/>
    <property type="match status" value="1"/>
</dbReference>
<dbReference type="Gene3D" id="2.40.50.140">
    <property type="entry name" value="Nucleic acid-binding proteins"/>
    <property type="match status" value="1"/>
</dbReference>
<dbReference type="HAMAP" id="MF_01588">
    <property type="entry name" value="DNA_ligase_A"/>
    <property type="match status" value="1"/>
</dbReference>
<dbReference type="InterPro" id="IPR001357">
    <property type="entry name" value="BRCT_dom"/>
</dbReference>
<dbReference type="InterPro" id="IPR036420">
    <property type="entry name" value="BRCT_dom_sf"/>
</dbReference>
<dbReference type="InterPro" id="IPR041663">
    <property type="entry name" value="DisA/LigA_HHH"/>
</dbReference>
<dbReference type="InterPro" id="IPR001679">
    <property type="entry name" value="DNA_ligase"/>
</dbReference>
<dbReference type="InterPro" id="IPR018239">
    <property type="entry name" value="DNA_ligase_AS"/>
</dbReference>
<dbReference type="InterPro" id="IPR033136">
    <property type="entry name" value="DNA_ligase_CS"/>
</dbReference>
<dbReference type="InterPro" id="IPR013839">
    <property type="entry name" value="DNAligase_adenylation"/>
</dbReference>
<dbReference type="InterPro" id="IPR013840">
    <property type="entry name" value="DNAligase_N"/>
</dbReference>
<dbReference type="InterPro" id="IPR003583">
    <property type="entry name" value="Hlx-hairpin-Hlx_DNA-bd_motif"/>
</dbReference>
<dbReference type="InterPro" id="IPR012340">
    <property type="entry name" value="NA-bd_OB-fold"/>
</dbReference>
<dbReference type="InterPro" id="IPR004150">
    <property type="entry name" value="NAD_DNA_ligase_OB"/>
</dbReference>
<dbReference type="InterPro" id="IPR010994">
    <property type="entry name" value="RuvA_2-like"/>
</dbReference>
<dbReference type="InterPro" id="IPR004149">
    <property type="entry name" value="Znf_DNAligase_C4"/>
</dbReference>
<dbReference type="NCBIfam" id="TIGR00575">
    <property type="entry name" value="dnlj"/>
    <property type="match status" value="1"/>
</dbReference>
<dbReference type="NCBIfam" id="NF005932">
    <property type="entry name" value="PRK07956.1"/>
    <property type="match status" value="1"/>
</dbReference>
<dbReference type="PANTHER" id="PTHR23389">
    <property type="entry name" value="CHROMOSOME TRANSMISSION FIDELITY FACTOR 18"/>
    <property type="match status" value="1"/>
</dbReference>
<dbReference type="PANTHER" id="PTHR23389:SF6">
    <property type="entry name" value="REPLICATION FACTOR C SUBUNIT 1"/>
    <property type="match status" value="1"/>
</dbReference>
<dbReference type="Pfam" id="PF00533">
    <property type="entry name" value="BRCT"/>
    <property type="match status" value="1"/>
</dbReference>
<dbReference type="Pfam" id="PF01653">
    <property type="entry name" value="DNA_ligase_aden"/>
    <property type="match status" value="1"/>
</dbReference>
<dbReference type="Pfam" id="PF03120">
    <property type="entry name" value="DNA_ligase_OB"/>
    <property type="match status" value="1"/>
</dbReference>
<dbReference type="Pfam" id="PF03119">
    <property type="entry name" value="DNA_ligase_ZBD"/>
    <property type="match status" value="1"/>
</dbReference>
<dbReference type="Pfam" id="PF12826">
    <property type="entry name" value="HHH_2"/>
    <property type="match status" value="1"/>
</dbReference>
<dbReference type="Pfam" id="PF14520">
    <property type="entry name" value="HHH_5"/>
    <property type="match status" value="1"/>
</dbReference>
<dbReference type="Pfam" id="PF22745">
    <property type="entry name" value="Nlig-Ia"/>
    <property type="match status" value="1"/>
</dbReference>
<dbReference type="PIRSF" id="PIRSF001604">
    <property type="entry name" value="LigA"/>
    <property type="match status" value="1"/>
</dbReference>
<dbReference type="SMART" id="SM00292">
    <property type="entry name" value="BRCT"/>
    <property type="match status" value="1"/>
</dbReference>
<dbReference type="SMART" id="SM00278">
    <property type="entry name" value="HhH1"/>
    <property type="match status" value="4"/>
</dbReference>
<dbReference type="SMART" id="SM00532">
    <property type="entry name" value="LIGANc"/>
    <property type="match status" value="1"/>
</dbReference>
<dbReference type="SUPFAM" id="SSF52113">
    <property type="entry name" value="BRCT domain"/>
    <property type="match status" value="1"/>
</dbReference>
<dbReference type="SUPFAM" id="SSF56091">
    <property type="entry name" value="DNA ligase/mRNA capping enzyme, catalytic domain"/>
    <property type="match status" value="1"/>
</dbReference>
<dbReference type="SUPFAM" id="SSF50249">
    <property type="entry name" value="Nucleic acid-binding proteins"/>
    <property type="match status" value="1"/>
</dbReference>
<dbReference type="SUPFAM" id="SSF47781">
    <property type="entry name" value="RuvA domain 2-like"/>
    <property type="match status" value="1"/>
</dbReference>
<dbReference type="PROSITE" id="PS50172">
    <property type="entry name" value="BRCT"/>
    <property type="match status" value="1"/>
</dbReference>
<dbReference type="PROSITE" id="PS01055">
    <property type="entry name" value="DNA_LIGASE_N1"/>
    <property type="match status" value="1"/>
</dbReference>
<dbReference type="PROSITE" id="PS01056">
    <property type="entry name" value="DNA_LIGASE_N2"/>
    <property type="match status" value="1"/>
</dbReference>
<comment type="function">
    <text evidence="1">DNA ligase that catalyzes the formation of phosphodiester linkages between 5'-phosphoryl and 3'-hydroxyl groups in double-stranded DNA using NAD as a coenzyme and as the energy source for the reaction. It is essential for DNA replication and repair of damaged DNA.</text>
</comment>
<comment type="catalytic activity">
    <reaction evidence="1">
        <text>NAD(+) + (deoxyribonucleotide)n-3'-hydroxyl + 5'-phospho-(deoxyribonucleotide)m = (deoxyribonucleotide)n+m + AMP + beta-nicotinamide D-nucleotide.</text>
        <dbReference type="EC" id="6.5.1.2"/>
    </reaction>
</comment>
<comment type="cofactor">
    <cofactor evidence="1">
        <name>Mg(2+)</name>
        <dbReference type="ChEBI" id="CHEBI:18420"/>
    </cofactor>
    <cofactor evidence="1">
        <name>Mn(2+)</name>
        <dbReference type="ChEBI" id="CHEBI:29035"/>
    </cofactor>
</comment>
<comment type="similarity">
    <text evidence="1">Belongs to the NAD-dependent DNA ligase family. LigA subfamily.</text>
</comment>
<gene>
    <name evidence="1" type="primary">ligA</name>
    <name type="ordered locus">Daro_1734</name>
</gene>
<keyword id="KW-0227">DNA damage</keyword>
<keyword id="KW-0234">DNA repair</keyword>
<keyword id="KW-0235">DNA replication</keyword>
<keyword id="KW-0436">Ligase</keyword>
<keyword id="KW-0460">Magnesium</keyword>
<keyword id="KW-0464">Manganese</keyword>
<keyword id="KW-0479">Metal-binding</keyword>
<keyword id="KW-0520">NAD</keyword>
<keyword id="KW-0862">Zinc</keyword>
<name>DNLJ_DECAR</name>
<protein>
    <recommendedName>
        <fullName evidence="1">DNA ligase</fullName>
        <ecNumber evidence="1">6.5.1.2</ecNumber>
    </recommendedName>
    <alternativeName>
        <fullName evidence="1">Polydeoxyribonucleotide synthase [NAD(+)]</fullName>
    </alternativeName>
</protein>
<sequence>MGLPEDVAKRAAWYRSELERHSYAYYVLDAPTIPDTEYDKLFRELQELEQQYPELLTADSPTHRVGGVPLKEFPPRQHGVPMLSLNNAFAPEEVEAFDKRIRDGLETIAAVDYAVEPKFDGLAISLTYENGVFTCGATRGDGVTGEEVTPNLRTLRCIPLRLRGEGWPALIEIRGEVLMFKADFAELNARQRERGDKEFANPRNAAAGSLRQLDSKITAGRPLSFFAYGVGAGADALAVKTHGEMMGLLAAWGFPVAEERRVVQGVRGLLGYFVEIGVKRPGLPYDIDGVVYKVNRLDWQAQLGFVSRAPRFAIAHKFPAEEALTEVLGIDVQVGRTGAITPVARLKPVFVGGVTVTNATLHNEDEVRRKDVRLGDTVIVRRAGDVIPEVVAIVPEKRPMRDLFGSEPLNPPFELPATCPECGSAVVKGDDEAIARCTGGLYCPAQRKQALWHFAARRAMDIEGLGDKLVDQLVDAGLVHSPADLYGLTVETLAGLERMGEKSAQNLVAAIDKSRQTTLARFIFGLGIRNVGEATARDLAKHFGGLDALLAADSAALQMVPDVGPVVAESLAAFFAEAHNREVIDGLRRAGVSWPEGEPAQAGPQLLAGKTLVLTGTLPTLKRDEAKALVEAAGGKVAGSVSKKTDYVVAGEEAGSKLEKAQELGVPVIDEAELMKLLAKGVE</sequence>